<proteinExistence type="inferred from homology"/>
<gene>
    <name evidence="1" type="primary">dnaG</name>
    <name type="ordered locus">sll1868</name>
</gene>
<organism>
    <name type="scientific">Synechocystis sp. (strain ATCC 27184 / PCC 6803 / Kazusa)</name>
    <dbReference type="NCBI Taxonomy" id="1111708"/>
    <lineage>
        <taxon>Bacteria</taxon>
        <taxon>Bacillati</taxon>
        <taxon>Cyanobacteriota</taxon>
        <taxon>Cyanophyceae</taxon>
        <taxon>Synechococcales</taxon>
        <taxon>Merismopediaceae</taxon>
        <taxon>Synechocystis</taxon>
    </lineage>
</organism>
<dbReference type="EC" id="2.7.7.101" evidence="1"/>
<dbReference type="EMBL" id="BA000022">
    <property type="protein sequence ID" value="BAA18229.1"/>
    <property type="molecule type" value="Genomic_DNA"/>
</dbReference>
<dbReference type="PIR" id="S75668">
    <property type="entry name" value="S75668"/>
</dbReference>
<dbReference type="SMR" id="P74143"/>
<dbReference type="FunCoup" id="P74143">
    <property type="interactions" value="322"/>
</dbReference>
<dbReference type="IntAct" id="P74143">
    <property type="interactions" value="5"/>
</dbReference>
<dbReference type="STRING" id="1148.gene:10499102"/>
<dbReference type="PaxDb" id="1148-1653314"/>
<dbReference type="EnsemblBacteria" id="BAA18229">
    <property type="protein sequence ID" value="BAA18229"/>
    <property type="gene ID" value="BAA18229"/>
</dbReference>
<dbReference type="KEGG" id="syn:sll1868"/>
<dbReference type="eggNOG" id="COG0358">
    <property type="taxonomic scope" value="Bacteria"/>
</dbReference>
<dbReference type="InParanoid" id="P74143"/>
<dbReference type="PhylomeDB" id="P74143"/>
<dbReference type="Proteomes" id="UP000001425">
    <property type="component" value="Chromosome"/>
</dbReference>
<dbReference type="GO" id="GO:0005737">
    <property type="term" value="C:cytoplasm"/>
    <property type="evidence" value="ECO:0000318"/>
    <property type="project" value="GO_Central"/>
</dbReference>
<dbReference type="GO" id="GO:0000428">
    <property type="term" value="C:DNA-directed RNA polymerase complex"/>
    <property type="evidence" value="ECO:0007669"/>
    <property type="project" value="UniProtKB-KW"/>
</dbReference>
<dbReference type="GO" id="GO:1990077">
    <property type="term" value="C:primosome complex"/>
    <property type="evidence" value="ECO:0007669"/>
    <property type="project" value="UniProtKB-KW"/>
</dbReference>
<dbReference type="GO" id="GO:0003677">
    <property type="term" value="F:DNA binding"/>
    <property type="evidence" value="ECO:0007669"/>
    <property type="project" value="UniProtKB-KW"/>
</dbReference>
<dbReference type="GO" id="GO:0003899">
    <property type="term" value="F:DNA-directed RNA polymerase activity"/>
    <property type="evidence" value="ECO:0007669"/>
    <property type="project" value="InterPro"/>
</dbReference>
<dbReference type="GO" id="GO:0008270">
    <property type="term" value="F:zinc ion binding"/>
    <property type="evidence" value="ECO:0007669"/>
    <property type="project" value="UniProtKB-UniRule"/>
</dbReference>
<dbReference type="GO" id="GO:0006269">
    <property type="term" value="P:DNA replication, synthesis of primer"/>
    <property type="evidence" value="ECO:0000318"/>
    <property type="project" value="GO_Central"/>
</dbReference>
<dbReference type="CDD" id="cd03364">
    <property type="entry name" value="TOPRIM_DnaG_primases"/>
    <property type="match status" value="1"/>
</dbReference>
<dbReference type="FunFam" id="3.40.1360.10:FF:000002">
    <property type="entry name" value="DNA primase"/>
    <property type="match status" value="1"/>
</dbReference>
<dbReference type="FunFam" id="3.90.580.10:FF:000001">
    <property type="entry name" value="DNA primase"/>
    <property type="match status" value="1"/>
</dbReference>
<dbReference type="FunFam" id="3.90.980.10:FF:000001">
    <property type="entry name" value="DNA primase"/>
    <property type="match status" value="1"/>
</dbReference>
<dbReference type="Gene3D" id="3.40.1360.10">
    <property type="match status" value="1"/>
</dbReference>
<dbReference type="Gene3D" id="3.90.980.10">
    <property type="entry name" value="DNA primase, catalytic core, N-terminal domain"/>
    <property type="match status" value="1"/>
</dbReference>
<dbReference type="Gene3D" id="3.90.580.10">
    <property type="entry name" value="Zinc finger, CHC2-type domain"/>
    <property type="match status" value="1"/>
</dbReference>
<dbReference type="HAMAP" id="MF_00974">
    <property type="entry name" value="DNA_primase_DnaG"/>
    <property type="match status" value="1"/>
</dbReference>
<dbReference type="InterPro" id="IPR037068">
    <property type="entry name" value="DNA_primase_core_N_sf"/>
</dbReference>
<dbReference type="InterPro" id="IPR019475">
    <property type="entry name" value="DNA_primase_DnaB-bd"/>
</dbReference>
<dbReference type="InterPro" id="IPR006295">
    <property type="entry name" value="DNA_primase_DnaG"/>
</dbReference>
<dbReference type="InterPro" id="IPR036977">
    <property type="entry name" value="DNA_primase_Znf_CHC2"/>
</dbReference>
<dbReference type="InterPro" id="IPR030846">
    <property type="entry name" value="DnaG_bac"/>
</dbReference>
<dbReference type="InterPro" id="IPR013264">
    <property type="entry name" value="DNAG_N"/>
</dbReference>
<dbReference type="InterPro" id="IPR050219">
    <property type="entry name" value="DnaG_primase"/>
</dbReference>
<dbReference type="InterPro" id="IPR034151">
    <property type="entry name" value="TOPRIM_DnaG_bac"/>
</dbReference>
<dbReference type="InterPro" id="IPR006171">
    <property type="entry name" value="TOPRIM_dom"/>
</dbReference>
<dbReference type="InterPro" id="IPR002694">
    <property type="entry name" value="Znf_CHC2"/>
</dbReference>
<dbReference type="NCBIfam" id="TIGR01391">
    <property type="entry name" value="dnaG"/>
    <property type="match status" value="1"/>
</dbReference>
<dbReference type="PANTHER" id="PTHR30313">
    <property type="entry name" value="DNA PRIMASE"/>
    <property type="match status" value="1"/>
</dbReference>
<dbReference type="PANTHER" id="PTHR30313:SF2">
    <property type="entry name" value="DNA PRIMASE"/>
    <property type="match status" value="1"/>
</dbReference>
<dbReference type="Pfam" id="PF10410">
    <property type="entry name" value="DnaB_bind"/>
    <property type="match status" value="1"/>
</dbReference>
<dbReference type="Pfam" id="PF08275">
    <property type="entry name" value="DNAG_N"/>
    <property type="match status" value="1"/>
</dbReference>
<dbReference type="Pfam" id="PF13155">
    <property type="entry name" value="Toprim_2"/>
    <property type="match status" value="1"/>
</dbReference>
<dbReference type="Pfam" id="PF01807">
    <property type="entry name" value="Zn_ribbon_DnaG"/>
    <property type="match status" value="1"/>
</dbReference>
<dbReference type="PIRSF" id="PIRSF002811">
    <property type="entry name" value="DnaG"/>
    <property type="match status" value="1"/>
</dbReference>
<dbReference type="SMART" id="SM00493">
    <property type="entry name" value="TOPRIM"/>
    <property type="match status" value="1"/>
</dbReference>
<dbReference type="SMART" id="SM00400">
    <property type="entry name" value="ZnF_CHCC"/>
    <property type="match status" value="1"/>
</dbReference>
<dbReference type="SUPFAM" id="SSF56731">
    <property type="entry name" value="DNA primase core"/>
    <property type="match status" value="1"/>
</dbReference>
<dbReference type="SUPFAM" id="SSF57783">
    <property type="entry name" value="Zinc beta-ribbon"/>
    <property type="match status" value="1"/>
</dbReference>
<dbReference type="PROSITE" id="PS50880">
    <property type="entry name" value="TOPRIM"/>
    <property type="match status" value="1"/>
</dbReference>
<name>DNAG_SYNY3</name>
<keyword id="KW-0235">DNA replication</keyword>
<keyword id="KW-0238">DNA-binding</keyword>
<keyword id="KW-0240">DNA-directed RNA polymerase</keyword>
<keyword id="KW-0460">Magnesium</keyword>
<keyword id="KW-0479">Metal-binding</keyword>
<keyword id="KW-0548">Nucleotidyltransferase</keyword>
<keyword id="KW-0639">Primosome</keyword>
<keyword id="KW-1185">Reference proteome</keyword>
<keyword id="KW-0804">Transcription</keyword>
<keyword id="KW-0808">Transferase</keyword>
<keyword id="KW-0862">Zinc</keyword>
<keyword id="KW-0863">Zinc-finger</keyword>
<feature type="chain" id="PRO_0000180529" description="DNA primase">
    <location>
        <begin position="1"/>
        <end position="635"/>
    </location>
</feature>
<feature type="domain" description="Toprim" evidence="1">
    <location>
        <begin position="265"/>
        <end position="348"/>
    </location>
</feature>
<feature type="zinc finger region" description="CHC2-type" evidence="1">
    <location>
        <begin position="41"/>
        <end position="65"/>
    </location>
</feature>
<feature type="binding site" evidence="1">
    <location>
        <position position="271"/>
    </location>
    <ligand>
        <name>Mg(2+)</name>
        <dbReference type="ChEBI" id="CHEBI:18420"/>
        <label>1</label>
        <note>catalytic</note>
    </ligand>
</feature>
<feature type="binding site" evidence="1">
    <location>
        <position position="317"/>
    </location>
    <ligand>
        <name>Mg(2+)</name>
        <dbReference type="ChEBI" id="CHEBI:18420"/>
        <label>1</label>
        <note>catalytic</note>
    </ligand>
</feature>
<feature type="binding site" evidence="1">
    <location>
        <position position="317"/>
    </location>
    <ligand>
        <name>Mg(2+)</name>
        <dbReference type="ChEBI" id="CHEBI:18420"/>
        <label>2</label>
    </ligand>
</feature>
<feature type="binding site" evidence="1">
    <location>
        <position position="319"/>
    </location>
    <ligand>
        <name>Mg(2+)</name>
        <dbReference type="ChEBI" id="CHEBI:18420"/>
        <label>2</label>
    </ligand>
</feature>
<comment type="function">
    <text evidence="1">RNA polymerase that catalyzes the synthesis of short RNA molecules used as primers for DNA polymerase during DNA replication.</text>
</comment>
<comment type="catalytic activity">
    <reaction evidence="1">
        <text>ssDNA + n NTP = ssDNA/pppN(pN)n-1 hybrid + (n-1) diphosphate.</text>
        <dbReference type="EC" id="2.7.7.101"/>
    </reaction>
</comment>
<comment type="cofactor">
    <cofactor evidence="1">
        <name>Zn(2+)</name>
        <dbReference type="ChEBI" id="CHEBI:29105"/>
    </cofactor>
    <text evidence="1">Binds 1 zinc ion per monomer.</text>
</comment>
<comment type="cofactor">
    <cofactor evidence="1">
        <name>Mg(2+)</name>
        <dbReference type="ChEBI" id="CHEBI:18420"/>
    </cofactor>
    <text evidence="1">Binds two Mg(2+) per subunit.</text>
</comment>
<comment type="subunit">
    <text evidence="1">Monomer. Interacts with DnaB.</text>
</comment>
<comment type="domain">
    <text evidence="1">Contains an N-terminal zinc-binding domain, a central core domain that contains the primase activity, and a C-terminal DnaB-binding domain.</text>
</comment>
<comment type="similarity">
    <text evidence="1">Belongs to the DnaG primase family.</text>
</comment>
<protein>
    <recommendedName>
        <fullName evidence="1">DNA primase</fullName>
        <ecNumber evidence="1">2.7.7.101</ecNumber>
    </recommendedName>
</protein>
<sequence>MDNLRLHPDTIQEIKQRIDIVEIIGDYVVLKKRGRDHLGLCPFHDEKSPSFSVSPAKQMYYCFGCGAGGNAFNFLMELGKRSFTDVALDLARRYQIQIQTLEPAQKQELQRQLSLREQLYEIMAVAAGFYHHTLFQPQGQEALTYLDQKRCLSSATIQEFQLGYAPAGWETLYRYLVEQKRYPVAAVEQAGLIKARQSGTGYYDQFRHRLMIPIRDVQGKTIAFGSRTLGNDEPKYLNSPETPLFHKSKTLFGLDQAKTAIQKVDEAILVEGYFDVIALHESGIKQTVAALGIALSRDQVQSLMRFSQSKQIIFNFDADKAGINATQRAIQEIEPLVYSGQVNLRILNLPAGKDADEFIHSSAENKEIYQTLVKQAPLWVDWQIQQLLKQKNLKDPLDFEQVARGMVDILKRLTDQNKRAYYLQLCGEILSQGDSRLISLQVNNLSSQLTYGDRPGKNGSRHWQAKDPTSSLLEKAEALLLKIYLHCPQERPTIDQILTENDLLFSFAHHRLLWQKIDQVREYFNLDSDPDNQLPLLVQLAYLEQEGDFNSVESLFQLTETSAEDLFRANLRIPEAIAIMEKVPWESYQKHCFGKLQQLDPRTQAEDFRYYQEQWQKAHQEIQRLESQRLNQPLN</sequence>
<accession>P74143</accession>
<evidence type="ECO:0000255" key="1">
    <source>
        <dbReference type="HAMAP-Rule" id="MF_00974"/>
    </source>
</evidence>
<reference key="1">
    <citation type="journal article" date="1996" name="DNA Res.">
        <title>Sequence analysis of the genome of the unicellular cyanobacterium Synechocystis sp. strain PCC6803. II. Sequence determination of the entire genome and assignment of potential protein-coding regions.</title>
        <authorList>
            <person name="Kaneko T."/>
            <person name="Sato S."/>
            <person name="Kotani H."/>
            <person name="Tanaka A."/>
            <person name="Asamizu E."/>
            <person name="Nakamura Y."/>
            <person name="Miyajima N."/>
            <person name="Hirosawa M."/>
            <person name="Sugiura M."/>
            <person name="Sasamoto S."/>
            <person name="Kimura T."/>
            <person name="Hosouchi T."/>
            <person name="Matsuno A."/>
            <person name="Muraki A."/>
            <person name="Nakazaki N."/>
            <person name="Naruo K."/>
            <person name="Okumura S."/>
            <person name="Shimpo S."/>
            <person name="Takeuchi C."/>
            <person name="Wada T."/>
            <person name="Watanabe A."/>
            <person name="Yamada M."/>
            <person name="Yasuda M."/>
            <person name="Tabata S."/>
        </authorList>
    </citation>
    <scope>NUCLEOTIDE SEQUENCE [LARGE SCALE GENOMIC DNA]</scope>
    <source>
        <strain>ATCC 27184 / PCC 6803 / Kazusa</strain>
    </source>
</reference>